<protein>
    <recommendedName>
        <fullName evidence="1">Lipoprotein signal peptidase</fullName>
        <ecNumber evidence="1">3.4.23.36</ecNumber>
    </recommendedName>
    <alternativeName>
        <fullName evidence="1">Prolipoprotein signal peptidase</fullName>
    </alternativeName>
    <alternativeName>
        <fullName evidence="1">Signal peptidase II</fullName>
        <shortName evidence="1">SPase II</shortName>
    </alternativeName>
</protein>
<comment type="function">
    <text evidence="1">This protein specifically catalyzes the removal of signal peptides from prolipoproteins.</text>
</comment>
<comment type="catalytic activity">
    <reaction evidence="1">
        <text>Release of signal peptides from bacterial membrane prolipoproteins. Hydrolyzes -Xaa-Yaa-Zaa-|-(S,diacylglyceryl)Cys-, in which Xaa is hydrophobic (preferably Leu), and Yaa (Ala or Ser) and Zaa (Gly or Ala) have small, neutral side chains.</text>
        <dbReference type="EC" id="3.4.23.36"/>
    </reaction>
</comment>
<comment type="pathway">
    <text evidence="1">Protein modification; lipoprotein biosynthesis (signal peptide cleavage).</text>
</comment>
<comment type="subcellular location">
    <subcellularLocation>
        <location evidence="1">Cell inner membrane</location>
        <topology evidence="1">Multi-pass membrane protein</topology>
    </subcellularLocation>
</comment>
<comment type="similarity">
    <text evidence="1">Belongs to the peptidase A8 family.</text>
</comment>
<dbReference type="EC" id="3.4.23.36" evidence="1"/>
<dbReference type="EMBL" id="CP000492">
    <property type="protein sequence ID" value="ABL64762.1"/>
    <property type="molecule type" value="Genomic_DNA"/>
</dbReference>
<dbReference type="RefSeq" id="WP_011744592.1">
    <property type="nucleotide sequence ID" value="NC_008639.1"/>
</dbReference>
<dbReference type="SMR" id="A1BED5"/>
<dbReference type="STRING" id="290317.Cpha266_0707"/>
<dbReference type="KEGG" id="cph:Cpha266_0707"/>
<dbReference type="eggNOG" id="COG0597">
    <property type="taxonomic scope" value="Bacteria"/>
</dbReference>
<dbReference type="HOGENOM" id="CLU_083252_4_0_10"/>
<dbReference type="OrthoDB" id="9810259at2"/>
<dbReference type="UniPathway" id="UPA00665"/>
<dbReference type="Proteomes" id="UP000008701">
    <property type="component" value="Chromosome"/>
</dbReference>
<dbReference type="GO" id="GO:0005886">
    <property type="term" value="C:plasma membrane"/>
    <property type="evidence" value="ECO:0007669"/>
    <property type="project" value="UniProtKB-SubCell"/>
</dbReference>
<dbReference type="GO" id="GO:0004190">
    <property type="term" value="F:aspartic-type endopeptidase activity"/>
    <property type="evidence" value="ECO:0007669"/>
    <property type="project" value="UniProtKB-UniRule"/>
</dbReference>
<dbReference type="GO" id="GO:0006508">
    <property type="term" value="P:proteolysis"/>
    <property type="evidence" value="ECO:0007669"/>
    <property type="project" value="UniProtKB-KW"/>
</dbReference>
<dbReference type="HAMAP" id="MF_00161">
    <property type="entry name" value="LspA"/>
    <property type="match status" value="1"/>
</dbReference>
<dbReference type="InterPro" id="IPR001872">
    <property type="entry name" value="Peptidase_A8"/>
</dbReference>
<dbReference type="NCBIfam" id="TIGR00077">
    <property type="entry name" value="lspA"/>
    <property type="match status" value="1"/>
</dbReference>
<dbReference type="NCBIfam" id="NF011368">
    <property type="entry name" value="PRK14787.1"/>
    <property type="match status" value="1"/>
</dbReference>
<dbReference type="PANTHER" id="PTHR33695">
    <property type="entry name" value="LIPOPROTEIN SIGNAL PEPTIDASE"/>
    <property type="match status" value="1"/>
</dbReference>
<dbReference type="PANTHER" id="PTHR33695:SF1">
    <property type="entry name" value="LIPOPROTEIN SIGNAL PEPTIDASE"/>
    <property type="match status" value="1"/>
</dbReference>
<dbReference type="Pfam" id="PF01252">
    <property type="entry name" value="Peptidase_A8"/>
    <property type="match status" value="1"/>
</dbReference>
<dbReference type="PRINTS" id="PR00781">
    <property type="entry name" value="LIPOSIGPTASE"/>
</dbReference>
<dbReference type="PROSITE" id="PS00855">
    <property type="entry name" value="SPASE_II"/>
    <property type="match status" value="1"/>
</dbReference>
<name>LSPA_CHLPD</name>
<feature type="chain" id="PRO_1000038797" description="Lipoprotein signal peptidase">
    <location>
        <begin position="1"/>
        <end position="168"/>
    </location>
</feature>
<feature type="transmembrane region" description="Helical" evidence="1">
    <location>
        <begin position="57"/>
        <end position="77"/>
    </location>
</feature>
<feature type="transmembrane region" description="Helical" evidence="1">
    <location>
        <begin position="86"/>
        <end position="106"/>
    </location>
</feature>
<feature type="transmembrane region" description="Helical" evidence="1">
    <location>
        <begin position="131"/>
        <end position="151"/>
    </location>
</feature>
<feature type="active site" evidence="1">
    <location>
        <position position="112"/>
    </location>
</feature>
<feature type="active site" evidence="1">
    <location>
        <position position="138"/>
    </location>
</feature>
<gene>
    <name evidence="1" type="primary">lspA</name>
    <name type="ordered locus">Cpha266_0707</name>
</gene>
<accession>A1BED5</accession>
<evidence type="ECO:0000255" key="1">
    <source>
        <dbReference type="HAMAP-Rule" id="MF_00161"/>
    </source>
</evidence>
<proteinExistence type="inferred from homology"/>
<organism>
    <name type="scientific">Chlorobium phaeobacteroides (strain DSM 266 / SMG 266 / 2430)</name>
    <dbReference type="NCBI Taxonomy" id="290317"/>
    <lineage>
        <taxon>Bacteria</taxon>
        <taxon>Pseudomonadati</taxon>
        <taxon>Chlorobiota</taxon>
        <taxon>Chlorobiia</taxon>
        <taxon>Chlorobiales</taxon>
        <taxon>Chlorobiaceae</taxon>
        <taxon>Chlorobium/Pelodictyon group</taxon>
        <taxon>Chlorobium</taxon>
    </lineage>
</organism>
<sequence length="168" mass="18846">MNWFFTLASIVIVLDQLTKKIAVMILKEKESVTLIPDWLKFTYAENNGIAFGMEFAPKEVMILLVGTISLLIALYVFRSKNRTTRFILPFALVFGGGVGNMIDRITGGKVIDFIHIDLYNGMIMGTWVSLWPIFNIADSAITIGACLLILFHSTIFPDQSVQKNTDVH</sequence>
<keyword id="KW-0064">Aspartyl protease</keyword>
<keyword id="KW-0997">Cell inner membrane</keyword>
<keyword id="KW-1003">Cell membrane</keyword>
<keyword id="KW-0378">Hydrolase</keyword>
<keyword id="KW-0472">Membrane</keyword>
<keyword id="KW-0645">Protease</keyword>
<keyword id="KW-1185">Reference proteome</keyword>
<keyword id="KW-0812">Transmembrane</keyword>
<keyword id="KW-1133">Transmembrane helix</keyword>
<reference key="1">
    <citation type="submission" date="2006-12" db="EMBL/GenBank/DDBJ databases">
        <title>Complete sequence of Chlorobium phaeobacteroides DSM 266.</title>
        <authorList>
            <consortium name="US DOE Joint Genome Institute"/>
            <person name="Copeland A."/>
            <person name="Lucas S."/>
            <person name="Lapidus A."/>
            <person name="Barry K."/>
            <person name="Detter J.C."/>
            <person name="Glavina del Rio T."/>
            <person name="Hammon N."/>
            <person name="Israni S."/>
            <person name="Pitluck S."/>
            <person name="Goltsman E."/>
            <person name="Schmutz J."/>
            <person name="Larimer F."/>
            <person name="Land M."/>
            <person name="Hauser L."/>
            <person name="Mikhailova N."/>
            <person name="Li T."/>
            <person name="Overmann J."/>
            <person name="Bryant D.A."/>
            <person name="Richardson P."/>
        </authorList>
    </citation>
    <scope>NUCLEOTIDE SEQUENCE [LARGE SCALE GENOMIC DNA]</scope>
    <source>
        <strain>DSM 266 / SMG 266 / 2430</strain>
    </source>
</reference>